<dbReference type="EC" id="2.1.1.192" evidence="1"/>
<dbReference type="EMBL" id="CU928145">
    <property type="protein sequence ID" value="CAU98675.1"/>
    <property type="molecule type" value="Genomic_DNA"/>
</dbReference>
<dbReference type="RefSeq" id="WP_000003317.1">
    <property type="nucleotide sequence ID" value="NZ_CP028304.1"/>
</dbReference>
<dbReference type="SMR" id="B7LDA9"/>
<dbReference type="KEGG" id="eck:EC55989_2802"/>
<dbReference type="HOGENOM" id="CLU_029101_0_0_6"/>
<dbReference type="Proteomes" id="UP000000746">
    <property type="component" value="Chromosome"/>
</dbReference>
<dbReference type="GO" id="GO:0005737">
    <property type="term" value="C:cytoplasm"/>
    <property type="evidence" value="ECO:0007669"/>
    <property type="project" value="UniProtKB-SubCell"/>
</dbReference>
<dbReference type="GO" id="GO:0051539">
    <property type="term" value="F:4 iron, 4 sulfur cluster binding"/>
    <property type="evidence" value="ECO:0007669"/>
    <property type="project" value="UniProtKB-UniRule"/>
</dbReference>
<dbReference type="GO" id="GO:0046872">
    <property type="term" value="F:metal ion binding"/>
    <property type="evidence" value="ECO:0007669"/>
    <property type="project" value="UniProtKB-KW"/>
</dbReference>
<dbReference type="GO" id="GO:0070040">
    <property type="term" value="F:rRNA (adenine(2503)-C2-)-methyltransferase activity"/>
    <property type="evidence" value="ECO:0007669"/>
    <property type="project" value="UniProtKB-UniRule"/>
</dbReference>
<dbReference type="GO" id="GO:0019843">
    <property type="term" value="F:rRNA binding"/>
    <property type="evidence" value="ECO:0007669"/>
    <property type="project" value="UniProtKB-UniRule"/>
</dbReference>
<dbReference type="GO" id="GO:0002935">
    <property type="term" value="F:tRNA (adenine(37)-C2)-methyltransferase activity"/>
    <property type="evidence" value="ECO:0007669"/>
    <property type="project" value="UniProtKB-UniRule"/>
</dbReference>
<dbReference type="GO" id="GO:0000049">
    <property type="term" value="F:tRNA binding"/>
    <property type="evidence" value="ECO:0007669"/>
    <property type="project" value="UniProtKB-UniRule"/>
</dbReference>
<dbReference type="GO" id="GO:0070475">
    <property type="term" value="P:rRNA base methylation"/>
    <property type="evidence" value="ECO:0007669"/>
    <property type="project" value="UniProtKB-UniRule"/>
</dbReference>
<dbReference type="GO" id="GO:0030488">
    <property type="term" value="P:tRNA methylation"/>
    <property type="evidence" value="ECO:0007669"/>
    <property type="project" value="UniProtKB-UniRule"/>
</dbReference>
<dbReference type="CDD" id="cd01335">
    <property type="entry name" value="Radical_SAM"/>
    <property type="match status" value="1"/>
</dbReference>
<dbReference type="FunFam" id="1.10.150.530:FF:000001">
    <property type="entry name" value="Dual-specificity RNA methyltransferase RlmN"/>
    <property type="match status" value="1"/>
</dbReference>
<dbReference type="FunFam" id="3.20.20.70:FF:000008">
    <property type="entry name" value="Dual-specificity RNA methyltransferase RlmN"/>
    <property type="match status" value="1"/>
</dbReference>
<dbReference type="Gene3D" id="1.10.150.530">
    <property type="match status" value="1"/>
</dbReference>
<dbReference type="Gene3D" id="3.20.20.70">
    <property type="entry name" value="Aldolase class I"/>
    <property type="match status" value="1"/>
</dbReference>
<dbReference type="HAMAP" id="MF_01849">
    <property type="entry name" value="RNA_methyltr_RlmN"/>
    <property type="match status" value="1"/>
</dbReference>
<dbReference type="InterPro" id="IPR013785">
    <property type="entry name" value="Aldolase_TIM"/>
</dbReference>
<dbReference type="InterPro" id="IPR040072">
    <property type="entry name" value="Methyltransferase_A"/>
</dbReference>
<dbReference type="InterPro" id="IPR048641">
    <property type="entry name" value="RlmN_N"/>
</dbReference>
<dbReference type="InterPro" id="IPR027492">
    <property type="entry name" value="RNA_MTrfase_RlmN"/>
</dbReference>
<dbReference type="InterPro" id="IPR004383">
    <property type="entry name" value="rRNA_lsu_MTrfase_RlmN/Cfr"/>
</dbReference>
<dbReference type="InterPro" id="IPR007197">
    <property type="entry name" value="rSAM"/>
</dbReference>
<dbReference type="NCBIfam" id="NF008396">
    <property type="entry name" value="PRK11194.1"/>
    <property type="match status" value="1"/>
</dbReference>
<dbReference type="NCBIfam" id="TIGR00048">
    <property type="entry name" value="rRNA_mod_RlmN"/>
    <property type="match status" value="1"/>
</dbReference>
<dbReference type="PANTHER" id="PTHR30544">
    <property type="entry name" value="23S RRNA METHYLTRANSFERASE"/>
    <property type="match status" value="1"/>
</dbReference>
<dbReference type="PANTHER" id="PTHR30544:SF5">
    <property type="entry name" value="RADICAL SAM CORE DOMAIN-CONTAINING PROTEIN"/>
    <property type="match status" value="1"/>
</dbReference>
<dbReference type="Pfam" id="PF04055">
    <property type="entry name" value="Radical_SAM"/>
    <property type="match status" value="1"/>
</dbReference>
<dbReference type="Pfam" id="PF21016">
    <property type="entry name" value="RlmN_N"/>
    <property type="match status" value="1"/>
</dbReference>
<dbReference type="PIRSF" id="PIRSF006004">
    <property type="entry name" value="CHP00048"/>
    <property type="match status" value="1"/>
</dbReference>
<dbReference type="SFLD" id="SFLDF00275">
    <property type="entry name" value="adenosine_C2_methyltransferase"/>
    <property type="match status" value="1"/>
</dbReference>
<dbReference type="SFLD" id="SFLDG01062">
    <property type="entry name" value="methyltransferase_(Class_A)"/>
    <property type="match status" value="1"/>
</dbReference>
<dbReference type="SUPFAM" id="SSF102114">
    <property type="entry name" value="Radical SAM enzymes"/>
    <property type="match status" value="1"/>
</dbReference>
<dbReference type="PROSITE" id="PS51918">
    <property type="entry name" value="RADICAL_SAM"/>
    <property type="match status" value="1"/>
</dbReference>
<proteinExistence type="inferred from homology"/>
<protein>
    <recommendedName>
        <fullName evidence="1">Dual-specificity RNA methyltransferase RlmN</fullName>
        <ecNumber evidence="1">2.1.1.192</ecNumber>
    </recommendedName>
    <alternativeName>
        <fullName evidence="1">23S rRNA (adenine(2503)-C(2))-methyltransferase</fullName>
    </alternativeName>
    <alternativeName>
        <fullName evidence="1">23S rRNA m2A2503 methyltransferase</fullName>
    </alternativeName>
    <alternativeName>
        <fullName evidence="1">Ribosomal RNA large subunit methyltransferase N</fullName>
    </alternativeName>
    <alternativeName>
        <fullName evidence="1">tRNA (adenine(37)-C(2))-methyltransferase</fullName>
    </alternativeName>
    <alternativeName>
        <fullName evidence="1">tRNA m2A37 methyltransferase</fullName>
    </alternativeName>
</protein>
<reference key="1">
    <citation type="journal article" date="2009" name="PLoS Genet.">
        <title>Organised genome dynamics in the Escherichia coli species results in highly diverse adaptive paths.</title>
        <authorList>
            <person name="Touchon M."/>
            <person name="Hoede C."/>
            <person name="Tenaillon O."/>
            <person name="Barbe V."/>
            <person name="Baeriswyl S."/>
            <person name="Bidet P."/>
            <person name="Bingen E."/>
            <person name="Bonacorsi S."/>
            <person name="Bouchier C."/>
            <person name="Bouvet O."/>
            <person name="Calteau A."/>
            <person name="Chiapello H."/>
            <person name="Clermont O."/>
            <person name="Cruveiller S."/>
            <person name="Danchin A."/>
            <person name="Diard M."/>
            <person name="Dossat C."/>
            <person name="Karoui M.E."/>
            <person name="Frapy E."/>
            <person name="Garry L."/>
            <person name="Ghigo J.M."/>
            <person name="Gilles A.M."/>
            <person name="Johnson J."/>
            <person name="Le Bouguenec C."/>
            <person name="Lescat M."/>
            <person name="Mangenot S."/>
            <person name="Martinez-Jehanne V."/>
            <person name="Matic I."/>
            <person name="Nassif X."/>
            <person name="Oztas S."/>
            <person name="Petit M.A."/>
            <person name="Pichon C."/>
            <person name="Rouy Z."/>
            <person name="Ruf C.S."/>
            <person name="Schneider D."/>
            <person name="Tourret J."/>
            <person name="Vacherie B."/>
            <person name="Vallenet D."/>
            <person name="Medigue C."/>
            <person name="Rocha E.P.C."/>
            <person name="Denamur E."/>
        </authorList>
    </citation>
    <scope>NUCLEOTIDE SEQUENCE [LARGE SCALE GENOMIC DNA]</scope>
    <source>
        <strain>55989 / EAEC</strain>
    </source>
</reference>
<keyword id="KW-0004">4Fe-4S</keyword>
<keyword id="KW-0963">Cytoplasm</keyword>
<keyword id="KW-1015">Disulfide bond</keyword>
<keyword id="KW-0408">Iron</keyword>
<keyword id="KW-0411">Iron-sulfur</keyword>
<keyword id="KW-0479">Metal-binding</keyword>
<keyword id="KW-0489">Methyltransferase</keyword>
<keyword id="KW-1185">Reference proteome</keyword>
<keyword id="KW-0698">rRNA processing</keyword>
<keyword id="KW-0949">S-adenosyl-L-methionine</keyword>
<keyword id="KW-0808">Transferase</keyword>
<keyword id="KW-0819">tRNA processing</keyword>
<evidence type="ECO:0000255" key="1">
    <source>
        <dbReference type="HAMAP-Rule" id="MF_01849"/>
    </source>
</evidence>
<evidence type="ECO:0000255" key="2">
    <source>
        <dbReference type="PROSITE-ProRule" id="PRU01266"/>
    </source>
</evidence>
<name>RLMN_ECO55</name>
<comment type="function">
    <text evidence="1">Specifically methylates position 2 of adenine 2503 in 23S rRNA and position 2 of adenine 37 in tRNAs. m2A2503 modification seems to play a crucial role in the proofreading step occurring at the peptidyl transferase center and thus would serve to optimize ribosomal fidelity.</text>
</comment>
<comment type="catalytic activity">
    <reaction evidence="1">
        <text>adenosine(2503) in 23S rRNA + 2 reduced [2Fe-2S]-[ferredoxin] + 2 S-adenosyl-L-methionine = 2-methyladenosine(2503) in 23S rRNA + 5'-deoxyadenosine + L-methionine + 2 oxidized [2Fe-2S]-[ferredoxin] + S-adenosyl-L-homocysteine</text>
        <dbReference type="Rhea" id="RHEA:42916"/>
        <dbReference type="Rhea" id="RHEA-COMP:10000"/>
        <dbReference type="Rhea" id="RHEA-COMP:10001"/>
        <dbReference type="Rhea" id="RHEA-COMP:10152"/>
        <dbReference type="Rhea" id="RHEA-COMP:10282"/>
        <dbReference type="ChEBI" id="CHEBI:17319"/>
        <dbReference type="ChEBI" id="CHEBI:33737"/>
        <dbReference type="ChEBI" id="CHEBI:33738"/>
        <dbReference type="ChEBI" id="CHEBI:57844"/>
        <dbReference type="ChEBI" id="CHEBI:57856"/>
        <dbReference type="ChEBI" id="CHEBI:59789"/>
        <dbReference type="ChEBI" id="CHEBI:74411"/>
        <dbReference type="ChEBI" id="CHEBI:74497"/>
        <dbReference type="EC" id="2.1.1.192"/>
    </reaction>
</comment>
<comment type="catalytic activity">
    <reaction evidence="1">
        <text>adenosine(37) in tRNA + 2 reduced [2Fe-2S]-[ferredoxin] + 2 S-adenosyl-L-methionine = 2-methyladenosine(37) in tRNA + 5'-deoxyadenosine + L-methionine + 2 oxidized [2Fe-2S]-[ferredoxin] + S-adenosyl-L-homocysteine</text>
        <dbReference type="Rhea" id="RHEA:43332"/>
        <dbReference type="Rhea" id="RHEA-COMP:10000"/>
        <dbReference type="Rhea" id="RHEA-COMP:10001"/>
        <dbReference type="Rhea" id="RHEA-COMP:10162"/>
        <dbReference type="Rhea" id="RHEA-COMP:10485"/>
        <dbReference type="ChEBI" id="CHEBI:17319"/>
        <dbReference type="ChEBI" id="CHEBI:33737"/>
        <dbReference type="ChEBI" id="CHEBI:33738"/>
        <dbReference type="ChEBI" id="CHEBI:57844"/>
        <dbReference type="ChEBI" id="CHEBI:57856"/>
        <dbReference type="ChEBI" id="CHEBI:59789"/>
        <dbReference type="ChEBI" id="CHEBI:74411"/>
        <dbReference type="ChEBI" id="CHEBI:74497"/>
        <dbReference type="EC" id="2.1.1.192"/>
    </reaction>
</comment>
<comment type="cofactor">
    <cofactor evidence="1">
        <name>[4Fe-4S] cluster</name>
        <dbReference type="ChEBI" id="CHEBI:49883"/>
    </cofactor>
    <text evidence="1">Binds 1 [4Fe-4S] cluster. The cluster is coordinated with 3 cysteines and an exchangeable S-adenosyl-L-methionine.</text>
</comment>
<comment type="subcellular location">
    <subcellularLocation>
        <location evidence="1">Cytoplasm</location>
    </subcellularLocation>
</comment>
<comment type="miscellaneous">
    <text evidence="1">Reaction proceeds by a ping-pong mechanism involving intermediate methylation of a conserved cysteine residue.</text>
</comment>
<comment type="similarity">
    <text evidence="1">Belongs to the radical SAM superfamily. RlmN family.</text>
</comment>
<sequence>MSEQLVTPENVTTKDGKINLLDLNRQQMREFFKDLGEKPFRADQVMKWMYHYCCDNFDEMTDINKVLRGKLKEVAEIRAPEVVEEQRSSDGTIKWAIAVGDQRVETVYIPEDDRATLCVSSQVGCALECKFCSTAQQGFNRNLRVSEIIGQVWRAAKIVGAAKVTGQRPITNVVMMGMGEPLLNLNNVVPAMEIMLDDFGFGLSKRRVTLSTSGVVPALDKLGDMIDVALAISLHAPNDEIRDEIVPINKKYNIETFLAAVRRYLEKSNANQGRVTIEYVMLDHVNDGTEHAHQLAELLKDTPCKINLIPWNPFPGAPYGRSSNSRIDRFSKVLMSYGFTTIVRKTRGDDIDAACGQLAGDVIDRTKRTLRKRMQGEAIDIKAV</sequence>
<organism>
    <name type="scientific">Escherichia coli (strain 55989 / EAEC)</name>
    <dbReference type="NCBI Taxonomy" id="585055"/>
    <lineage>
        <taxon>Bacteria</taxon>
        <taxon>Pseudomonadati</taxon>
        <taxon>Pseudomonadota</taxon>
        <taxon>Gammaproteobacteria</taxon>
        <taxon>Enterobacterales</taxon>
        <taxon>Enterobacteriaceae</taxon>
        <taxon>Escherichia</taxon>
    </lineage>
</organism>
<feature type="chain" id="PRO_1000188570" description="Dual-specificity RNA methyltransferase RlmN">
    <location>
        <begin position="1"/>
        <end position="384"/>
    </location>
</feature>
<feature type="domain" description="Radical SAM core" evidence="2">
    <location>
        <begin position="111"/>
        <end position="350"/>
    </location>
</feature>
<feature type="active site" description="Proton acceptor" evidence="1">
    <location>
        <position position="105"/>
    </location>
</feature>
<feature type="active site" description="S-methylcysteine intermediate" evidence="1">
    <location>
        <position position="355"/>
    </location>
</feature>
<feature type="binding site" evidence="1">
    <location>
        <position position="125"/>
    </location>
    <ligand>
        <name>[4Fe-4S] cluster</name>
        <dbReference type="ChEBI" id="CHEBI:49883"/>
        <note>4Fe-4S-S-AdoMet</note>
    </ligand>
</feature>
<feature type="binding site" evidence="1">
    <location>
        <position position="129"/>
    </location>
    <ligand>
        <name>[4Fe-4S] cluster</name>
        <dbReference type="ChEBI" id="CHEBI:49883"/>
        <note>4Fe-4S-S-AdoMet</note>
    </ligand>
</feature>
<feature type="binding site" evidence="1">
    <location>
        <position position="132"/>
    </location>
    <ligand>
        <name>[4Fe-4S] cluster</name>
        <dbReference type="ChEBI" id="CHEBI:49883"/>
        <note>4Fe-4S-S-AdoMet</note>
    </ligand>
</feature>
<feature type="binding site" evidence="1">
    <location>
        <begin position="179"/>
        <end position="180"/>
    </location>
    <ligand>
        <name>S-adenosyl-L-methionine</name>
        <dbReference type="ChEBI" id="CHEBI:59789"/>
    </ligand>
</feature>
<feature type="binding site" evidence="1">
    <location>
        <position position="211"/>
    </location>
    <ligand>
        <name>S-adenosyl-L-methionine</name>
        <dbReference type="ChEBI" id="CHEBI:59789"/>
    </ligand>
</feature>
<feature type="binding site" evidence="1">
    <location>
        <begin position="233"/>
        <end position="235"/>
    </location>
    <ligand>
        <name>S-adenosyl-L-methionine</name>
        <dbReference type="ChEBI" id="CHEBI:59789"/>
    </ligand>
</feature>
<feature type="binding site" evidence="1">
    <location>
        <position position="312"/>
    </location>
    <ligand>
        <name>S-adenosyl-L-methionine</name>
        <dbReference type="ChEBI" id="CHEBI:59789"/>
    </ligand>
</feature>
<feature type="disulfide bond" description="(transient)" evidence="1">
    <location>
        <begin position="118"/>
        <end position="355"/>
    </location>
</feature>
<gene>
    <name evidence="1" type="primary">rlmN</name>
    <name type="ordered locus">EC55989_2802</name>
</gene>
<accession>B7LDA9</accession>